<feature type="chain" id="PRO_0000065852" description="Protein virC2">
    <location>
        <begin position="1"/>
        <end position="202"/>
    </location>
</feature>
<feature type="region of interest" description="Disordered" evidence="1">
    <location>
        <begin position="24"/>
        <end position="65"/>
    </location>
</feature>
<geneLocation type="plasmid">
    <name>pRiA4b</name>
</geneLocation>
<proteinExistence type="predicted"/>
<keyword id="KW-0192">Crown gall tumor</keyword>
<keyword id="KW-0614">Plasmid</keyword>
<gene>
    <name type="primary">virC2</name>
</gene>
<name>VIRC2_RHIRH</name>
<accession>P13460</accession>
<evidence type="ECO:0000256" key="1">
    <source>
        <dbReference type="SAM" id="MobiDB-lite"/>
    </source>
</evidence>
<protein>
    <recommendedName>
        <fullName>Protein virC2</fullName>
    </recommendedName>
</protein>
<sequence length="202" mass="22075">MGIRKPALSVGEARRLAAARPEMVQAHLPVATQNSALPQPPENPDQEDRRPAPAVAKRHPSADRQSMLTVDALSSTTAPEKIQVFLSARPPAPQVSKIYDNLILQYSPSKSLQMILRRALGDFEKMLADGSFRTAPKSYPIPQTASEKSIIVQTSRMFPVPLLEVARNHFDPLGLETARAFGHKLATAALASFFAGEKTTKR</sequence>
<dbReference type="EMBL" id="X12867">
    <property type="protein sequence ID" value="CAA31348.1"/>
    <property type="molecule type" value="Genomic_DNA"/>
</dbReference>
<dbReference type="PIR" id="S06882">
    <property type="entry name" value="S06882"/>
</dbReference>
<dbReference type="RefSeq" id="WP_032488279.1">
    <property type="nucleotide sequence ID" value="NZ_VCBD01000008.1"/>
</dbReference>
<dbReference type="SMR" id="P13460"/>
<dbReference type="eggNOG" id="ENOG502ZUU5">
    <property type="taxonomic scope" value="Bacteria"/>
</dbReference>
<dbReference type="GO" id="GO:0006355">
    <property type="term" value="P:regulation of DNA-templated transcription"/>
    <property type="evidence" value="ECO:0007669"/>
    <property type="project" value="InterPro"/>
</dbReference>
<dbReference type="Gene3D" id="1.10.1220.190">
    <property type="entry name" value="VirC2, RHH domain"/>
    <property type="match status" value="1"/>
</dbReference>
<dbReference type="InterPro" id="IPR010985">
    <property type="entry name" value="Ribbon_hlx_hlx"/>
</dbReference>
<dbReference type="InterPro" id="IPR009841">
    <property type="entry name" value="VirC2"/>
</dbReference>
<dbReference type="InterPro" id="IPR038473">
    <property type="entry name" value="VirC2_C_sf"/>
</dbReference>
<dbReference type="NCBIfam" id="NF010436">
    <property type="entry name" value="PRK13862.1"/>
    <property type="match status" value="1"/>
</dbReference>
<dbReference type="Pfam" id="PF07181">
    <property type="entry name" value="VirC2"/>
    <property type="match status" value="1"/>
</dbReference>
<dbReference type="PIRSF" id="PIRSF016094">
    <property type="entry name" value="VirC2"/>
    <property type="match status" value="1"/>
</dbReference>
<dbReference type="SUPFAM" id="SSF47598">
    <property type="entry name" value="Ribbon-helix-helix"/>
    <property type="match status" value="1"/>
</dbReference>
<organism>
    <name type="scientific">Rhizobium rhizogenes</name>
    <name type="common">Agrobacterium rhizogenes</name>
    <dbReference type="NCBI Taxonomy" id="359"/>
    <lineage>
        <taxon>Bacteria</taxon>
        <taxon>Pseudomonadati</taxon>
        <taxon>Pseudomonadota</taxon>
        <taxon>Alphaproteobacteria</taxon>
        <taxon>Hyphomicrobiales</taxon>
        <taxon>Rhizobiaceae</taxon>
        <taxon>Rhizobium/Agrobacterium group</taxon>
        <taxon>Rhizobium</taxon>
    </lineage>
</organism>
<reference key="1">
    <citation type="journal article" date="1988" name="Mol. Gen. Genet.">
        <title>Organization and characterization of the virCD genes from Agrobacterium rhizogenes.</title>
        <authorList>
            <person name="Hirayama T."/>
            <person name="Muranaka T."/>
            <person name="Ohkawa H."/>
            <person name="Oka A."/>
        </authorList>
    </citation>
    <scope>NUCLEOTIDE SEQUENCE [GENOMIC DNA]</scope>
    <source>
        <strain>A4</strain>
    </source>
</reference>